<gene>
    <name evidence="1" type="primary">gcvH</name>
    <name type="ordered locus">VC0395_0953</name>
    <name type="ordered locus">VC395_A0314</name>
</gene>
<organism>
    <name type="scientific">Vibrio cholerae serotype O1 (strain ATCC 39541 / Classical Ogawa 395 / O395)</name>
    <dbReference type="NCBI Taxonomy" id="345073"/>
    <lineage>
        <taxon>Bacteria</taxon>
        <taxon>Pseudomonadati</taxon>
        <taxon>Pseudomonadota</taxon>
        <taxon>Gammaproteobacteria</taxon>
        <taxon>Vibrionales</taxon>
        <taxon>Vibrionaceae</taxon>
        <taxon>Vibrio</taxon>
    </lineage>
</organism>
<proteinExistence type="inferred from homology"/>
<accession>A5EZ07</accession>
<accession>C3M808</accession>
<sequence length="126" mass="13931">MDKTLKFTESHEWVRDNGDGTVTIGISEHAQEMLGDVVFVELPEIDAEIDAGDSFSLVESVKAASDIYAPVTGVVIEVNEDLQNSPELINEEPYDGGWIVKVKMSDPDELKDLKDAEEYLASIEED</sequence>
<protein>
    <recommendedName>
        <fullName evidence="1">Glycine cleavage system H protein</fullName>
    </recommendedName>
</protein>
<reference key="1">
    <citation type="submission" date="2007-03" db="EMBL/GenBank/DDBJ databases">
        <authorList>
            <person name="Heidelberg J."/>
        </authorList>
    </citation>
    <scope>NUCLEOTIDE SEQUENCE [LARGE SCALE GENOMIC DNA]</scope>
    <source>
        <strain>ATCC 39541 / Classical Ogawa 395 / O395</strain>
    </source>
</reference>
<reference key="2">
    <citation type="journal article" date="2008" name="PLoS ONE">
        <title>A recalibrated molecular clock and independent origins for the cholera pandemic clones.</title>
        <authorList>
            <person name="Feng L."/>
            <person name="Reeves P.R."/>
            <person name="Lan R."/>
            <person name="Ren Y."/>
            <person name="Gao C."/>
            <person name="Zhou Z."/>
            <person name="Ren Y."/>
            <person name="Cheng J."/>
            <person name="Wang W."/>
            <person name="Wang J."/>
            <person name="Qian W."/>
            <person name="Li D."/>
            <person name="Wang L."/>
        </authorList>
    </citation>
    <scope>NUCLEOTIDE SEQUENCE [LARGE SCALE GENOMIC DNA]</scope>
    <source>
        <strain>ATCC 39541 / Classical Ogawa 395 / O395</strain>
    </source>
</reference>
<keyword id="KW-0450">Lipoyl</keyword>
<name>GCSH_VIBC3</name>
<feature type="chain" id="PRO_1000071907" description="Glycine cleavage system H protein">
    <location>
        <begin position="1"/>
        <end position="126"/>
    </location>
</feature>
<feature type="domain" description="Lipoyl-binding" evidence="2">
    <location>
        <begin position="21"/>
        <end position="103"/>
    </location>
</feature>
<feature type="modified residue" description="N6-lipoyllysine" evidence="1">
    <location>
        <position position="62"/>
    </location>
</feature>
<dbReference type="EMBL" id="CP000626">
    <property type="protein sequence ID" value="ABQ18676.1"/>
    <property type="molecule type" value="Genomic_DNA"/>
</dbReference>
<dbReference type="EMBL" id="CP001236">
    <property type="protein sequence ID" value="ACP11154.1"/>
    <property type="molecule type" value="Genomic_DNA"/>
</dbReference>
<dbReference type="RefSeq" id="WP_000361811.1">
    <property type="nucleotide sequence ID" value="NZ_JAACZH010000047.1"/>
</dbReference>
<dbReference type="SMR" id="A5EZ07"/>
<dbReference type="GeneID" id="89512304"/>
<dbReference type="KEGG" id="vco:VC0395_0953"/>
<dbReference type="KEGG" id="vcr:VC395_A0314"/>
<dbReference type="PATRIC" id="fig|345073.21.peg.3074"/>
<dbReference type="eggNOG" id="COG0509">
    <property type="taxonomic scope" value="Bacteria"/>
</dbReference>
<dbReference type="HOGENOM" id="CLU_097408_2_0_6"/>
<dbReference type="OrthoDB" id="9796712at2"/>
<dbReference type="Proteomes" id="UP000000249">
    <property type="component" value="Chromosome 1"/>
</dbReference>
<dbReference type="GO" id="GO:0005829">
    <property type="term" value="C:cytosol"/>
    <property type="evidence" value="ECO:0007669"/>
    <property type="project" value="TreeGrafter"/>
</dbReference>
<dbReference type="GO" id="GO:0005960">
    <property type="term" value="C:glycine cleavage complex"/>
    <property type="evidence" value="ECO:0007669"/>
    <property type="project" value="InterPro"/>
</dbReference>
<dbReference type="GO" id="GO:0019464">
    <property type="term" value="P:glycine decarboxylation via glycine cleavage system"/>
    <property type="evidence" value="ECO:0007669"/>
    <property type="project" value="UniProtKB-UniRule"/>
</dbReference>
<dbReference type="CDD" id="cd06848">
    <property type="entry name" value="GCS_H"/>
    <property type="match status" value="1"/>
</dbReference>
<dbReference type="FunFam" id="2.40.50.100:FF:000011">
    <property type="entry name" value="Glycine cleavage system H protein"/>
    <property type="match status" value="1"/>
</dbReference>
<dbReference type="Gene3D" id="2.40.50.100">
    <property type="match status" value="1"/>
</dbReference>
<dbReference type="HAMAP" id="MF_00272">
    <property type="entry name" value="GcvH"/>
    <property type="match status" value="1"/>
</dbReference>
<dbReference type="InterPro" id="IPR003016">
    <property type="entry name" value="2-oxoA_DH_lipoyl-BS"/>
</dbReference>
<dbReference type="InterPro" id="IPR000089">
    <property type="entry name" value="Biotin_lipoyl"/>
</dbReference>
<dbReference type="InterPro" id="IPR002930">
    <property type="entry name" value="GCV_H"/>
</dbReference>
<dbReference type="InterPro" id="IPR033753">
    <property type="entry name" value="GCV_H/Fam206"/>
</dbReference>
<dbReference type="InterPro" id="IPR017453">
    <property type="entry name" value="GCV_H_sub"/>
</dbReference>
<dbReference type="InterPro" id="IPR011053">
    <property type="entry name" value="Single_hybrid_motif"/>
</dbReference>
<dbReference type="NCBIfam" id="TIGR00527">
    <property type="entry name" value="gcvH"/>
    <property type="match status" value="1"/>
</dbReference>
<dbReference type="NCBIfam" id="NF002270">
    <property type="entry name" value="PRK01202.1"/>
    <property type="match status" value="1"/>
</dbReference>
<dbReference type="PANTHER" id="PTHR11715">
    <property type="entry name" value="GLYCINE CLEAVAGE SYSTEM H PROTEIN"/>
    <property type="match status" value="1"/>
</dbReference>
<dbReference type="PANTHER" id="PTHR11715:SF3">
    <property type="entry name" value="GLYCINE CLEAVAGE SYSTEM H PROTEIN-RELATED"/>
    <property type="match status" value="1"/>
</dbReference>
<dbReference type="Pfam" id="PF01597">
    <property type="entry name" value="GCV_H"/>
    <property type="match status" value="1"/>
</dbReference>
<dbReference type="SUPFAM" id="SSF51230">
    <property type="entry name" value="Single hybrid motif"/>
    <property type="match status" value="1"/>
</dbReference>
<dbReference type="PROSITE" id="PS50968">
    <property type="entry name" value="BIOTINYL_LIPOYL"/>
    <property type="match status" value="1"/>
</dbReference>
<dbReference type="PROSITE" id="PS00189">
    <property type="entry name" value="LIPOYL"/>
    <property type="match status" value="1"/>
</dbReference>
<comment type="function">
    <text evidence="1">The glycine cleavage system catalyzes the degradation of glycine. The H protein shuttles the methylamine group of glycine from the P protein to the T protein.</text>
</comment>
<comment type="cofactor">
    <cofactor evidence="1">
        <name>(R)-lipoate</name>
        <dbReference type="ChEBI" id="CHEBI:83088"/>
    </cofactor>
    <text evidence="1">Binds 1 lipoyl cofactor covalently.</text>
</comment>
<comment type="subunit">
    <text evidence="1">The glycine cleavage system is composed of four proteins: P, T, L and H.</text>
</comment>
<comment type="similarity">
    <text evidence="1">Belongs to the GcvH family.</text>
</comment>
<evidence type="ECO:0000255" key="1">
    <source>
        <dbReference type="HAMAP-Rule" id="MF_00272"/>
    </source>
</evidence>
<evidence type="ECO:0000255" key="2">
    <source>
        <dbReference type="PROSITE-ProRule" id="PRU01066"/>
    </source>
</evidence>